<organism>
    <name type="scientific">Mycobacterium tuberculosis (strain CDC 1551 / Oshkosh)</name>
    <dbReference type="NCBI Taxonomy" id="83331"/>
    <lineage>
        <taxon>Bacteria</taxon>
        <taxon>Bacillati</taxon>
        <taxon>Actinomycetota</taxon>
        <taxon>Actinomycetes</taxon>
        <taxon>Mycobacteriales</taxon>
        <taxon>Mycobacteriaceae</taxon>
        <taxon>Mycobacterium</taxon>
        <taxon>Mycobacterium tuberculosis complex</taxon>
    </lineage>
</organism>
<comment type="function">
    <text evidence="1">F(1)F(0) ATP synthase produces ATP from ADP in the presence of a proton or sodium gradient. F-type ATPases consist of two structural domains, F(1) containing the extramembraneous catalytic core and F(0) containing the membrane proton channel, linked together by a central stalk and a peripheral stalk. During catalysis, ATP synthesis in the catalytic domain of F(1) is coupled via a rotary mechanism of the central stalk subunits to proton translocation (By similarity).</text>
</comment>
<comment type="function">
    <text evidence="1">This fusion protein includes a component of the F(0) channel (subunit b) and of the F(1) subunit (subunit delta). Two copies of subunit b and one of delta together form the peripheral 'stator' stalk which links F(1) to F(0) (By similarity).</text>
</comment>
<comment type="subunit">
    <text evidence="1">F-type ATPases have 2 components, F(1) - the catalytic core - and F(0) - the membrane proton channel. F(1) has five subunits: alpha(3), beta(3), gamma(1), delta(1), epsilon(1). F(0) has three main subunits: a(1), b(2) and c(10-14). The alpha and beta chains form an alternating ring which encloses part of the gamma chain. F(1) is attached to F(0) by a central stalk formed by the gamma and epsilon chains, while a peripheral stalk is formed by the delta and b chains (By similarity).</text>
</comment>
<comment type="subcellular location">
    <subcellularLocation>
        <location evidence="1">Cell membrane</location>
        <topology evidence="1">Single-pass membrane protein</topology>
    </subcellularLocation>
</comment>
<comment type="similarity">
    <text evidence="3">In the N-terminal section; belongs to the ATPase B chain family.</text>
</comment>
<comment type="similarity">
    <text evidence="3">In the C-terminal section; belongs to the ATPase delta chain family.</text>
</comment>
<feature type="chain" id="PRO_0000426901" description="ATP synthase subunit b-delta">
    <location>
        <begin position="1"/>
        <end position="446"/>
    </location>
</feature>
<feature type="transmembrane region" description="Helical" evidence="2">
    <location>
        <begin position="4"/>
        <end position="24"/>
    </location>
</feature>
<feature type="region of interest" description="ATP synthase subunit b">
    <location>
        <begin position="1"/>
        <end position="168"/>
    </location>
</feature>
<feature type="region of interest" description="ATP synthase subunit delta">
    <location>
        <begin position="169"/>
        <end position="446"/>
    </location>
</feature>
<gene>
    <name type="primary">atpFH</name>
    <name type="synonym">atpF</name>
    <name type="synonym">atpH</name>
    <name type="ordered locus">MT1347</name>
</gene>
<accession>P9WPV2</accession>
<accession>L0T902</accession>
<accession>P0A500</accession>
<accession>Q10594</accession>
<protein>
    <recommendedName>
        <fullName>ATP synthase subunit b-delta</fullName>
    </recommendedName>
    <domain>
        <recommendedName>
            <fullName>ATP synthase subunit b</fullName>
        </recommendedName>
        <alternativeName>
            <fullName>ATP synthase F(0) sector subunit b 2</fullName>
        </alternativeName>
        <alternativeName>
            <fullName>ATPase subunit I 2</fullName>
        </alternativeName>
        <alternativeName>
            <fullName>F-type ATPase subunit b 2</fullName>
            <shortName>F-ATPase subunit b 2</shortName>
        </alternativeName>
    </domain>
    <domain>
        <recommendedName>
            <fullName>ATP synthase subunit delta</fullName>
        </recommendedName>
        <alternativeName>
            <fullName>ATP synthase F(1) sector subunit delta</fullName>
        </alternativeName>
        <alternativeName>
            <fullName>F-type ATPase subunit delta</fullName>
            <shortName>F-ATPase subunit delta</shortName>
        </alternativeName>
    </domain>
</protein>
<keyword id="KW-0066">ATP synthesis</keyword>
<keyword id="KW-1003">Cell membrane</keyword>
<keyword id="KW-0138">CF(0)</keyword>
<keyword id="KW-0139">CF(1)</keyword>
<keyword id="KW-0375">Hydrogen ion transport</keyword>
<keyword id="KW-0406">Ion transport</keyword>
<keyword id="KW-0472">Membrane</keyword>
<keyword id="KW-0511">Multifunctional enzyme</keyword>
<keyword id="KW-1185">Reference proteome</keyword>
<keyword id="KW-0812">Transmembrane</keyword>
<keyword id="KW-1133">Transmembrane helix</keyword>
<keyword id="KW-0813">Transport</keyword>
<evidence type="ECO:0000250" key="1"/>
<evidence type="ECO:0000255" key="2"/>
<evidence type="ECO:0000305" key="3"/>
<reference key="1">
    <citation type="journal article" date="2002" name="J. Bacteriol.">
        <title>Whole-genome comparison of Mycobacterium tuberculosis clinical and laboratory strains.</title>
        <authorList>
            <person name="Fleischmann R.D."/>
            <person name="Alland D."/>
            <person name="Eisen J.A."/>
            <person name="Carpenter L."/>
            <person name="White O."/>
            <person name="Peterson J.D."/>
            <person name="DeBoy R.T."/>
            <person name="Dodson R.J."/>
            <person name="Gwinn M.L."/>
            <person name="Haft D.H."/>
            <person name="Hickey E.K."/>
            <person name="Kolonay J.F."/>
            <person name="Nelson W.C."/>
            <person name="Umayam L.A."/>
            <person name="Ermolaeva M.D."/>
            <person name="Salzberg S.L."/>
            <person name="Delcher A."/>
            <person name="Utterback T.R."/>
            <person name="Weidman J.F."/>
            <person name="Khouri H.M."/>
            <person name="Gill J."/>
            <person name="Mikula A."/>
            <person name="Bishai W."/>
            <person name="Jacobs W.R. Jr."/>
            <person name="Venter J.C."/>
            <person name="Fraser C.M."/>
        </authorList>
    </citation>
    <scope>NUCLEOTIDE SEQUENCE [LARGE SCALE GENOMIC DNA]</scope>
    <source>
        <strain>CDC 1551 / Oshkosh</strain>
    </source>
</reference>
<proteinExistence type="inferred from homology"/>
<dbReference type="EMBL" id="AE000516">
    <property type="protein sequence ID" value="AAK45609.1"/>
    <property type="molecule type" value="Genomic_DNA"/>
</dbReference>
<dbReference type="PIR" id="G70774">
    <property type="entry name" value="G70774"/>
</dbReference>
<dbReference type="RefSeq" id="WP_003917452.1">
    <property type="nucleotide sequence ID" value="NZ_KK341227.1"/>
</dbReference>
<dbReference type="SMR" id="P9WPV2"/>
<dbReference type="KEGG" id="mtc:MT1347"/>
<dbReference type="PATRIC" id="fig|83331.31.peg.1453"/>
<dbReference type="HOGENOM" id="CLU_722652_0_0_11"/>
<dbReference type="Proteomes" id="UP000001020">
    <property type="component" value="Chromosome"/>
</dbReference>
<dbReference type="GO" id="GO:0005886">
    <property type="term" value="C:plasma membrane"/>
    <property type="evidence" value="ECO:0007669"/>
    <property type="project" value="UniProtKB-SubCell"/>
</dbReference>
<dbReference type="GO" id="GO:0045259">
    <property type="term" value="C:proton-transporting ATP synthase complex"/>
    <property type="evidence" value="ECO:0007669"/>
    <property type="project" value="UniProtKB-KW"/>
</dbReference>
<dbReference type="GO" id="GO:0046933">
    <property type="term" value="F:proton-transporting ATP synthase activity, rotational mechanism"/>
    <property type="evidence" value="ECO:0007669"/>
    <property type="project" value="UniProtKB-UniRule"/>
</dbReference>
<dbReference type="CDD" id="cd06503">
    <property type="entry name" value="ATP-synt_Fo_b"/>
    <property type="match status" value="1"/>
</dbReference>
<dbReference type="Gene3D" id="1.20.5.620">
    <property type="entry name" value="F1F0 ATP synthase subunit B, membrane domain"/>
    <property type="match status" value="1"/>
</dbReference>
<dbReference type="Gene3D" id="1.10.520.20">
    <property type="entry name" value="N-terminal domain of the delta subunit of the F1F0-ATP synthase"/>
    <property type="match status" value="1"/>
</dbReference>
<dbReference type="HAMAP" id="MF_01398">
    <property type="entry name" value="ATP_synth_b_bprime"/>
    <property type="match status" value="1"/>
</dbReference>
<dbReference type="HAMAP" id="MF_01416">
    <property type="entry name" value="ATP_synth_delta_bact"/>
    <property type="match status" value="1"/>
</dbReference>
<dbReference type="InterPro" id="IPR028987">
    <property type="entry name" value="ATP_synth_B-like_membr_sf"/>
</dbReference>
<dbReference type="InterPro" id="IPR002146">
    <property type="entry name" value="ATP_synth_b/b'su_bac/chlpt"/>
</dbReference>
<dbReference type="InterPro" id="IPR005864">
    <property type="entry name" value="ATP_synth_F0_bsu_bac"/>
</dbReference>
<dbReference type="InterPro" id="IPR026015">
    <property type="entry name" value="ATP_synth_OSCP/delta_N_sf"/>
</dbReference>
<dbReference type="InterPro" id="IPR000711">
    <property type="entry name" value="ATPase_OSCP/dsu"/>
</dbReference>
<dbReference type="NCBIfam" id="TIGR01144">
    <property type="entry name" value="ATP_synt_b"/>
    <property type="match status" value="1"/>
</dbReference>
<dbReference type="NCBIfam" id="TIGR01145">
    <property type="entry name" value="ATP_synt_delta"/>
    <property type="match status" value="1"/>
</dbReference>
<dbReference type="NCBIfam" id="NF009961">
    <property type="entry name" value="PRK13428.1"/>
    <property type="match status" value="1"/>
</dbReference>
<dbReference type="NCBIfam" id="NF009967">
    <property type="entry name" value="PRK13430.1"/>
    <property type="match status" value="1"/>
</dbReference>
<dbReference type="PANTHER" id="PTHR11910">
    <property type="entry name" value="ATP SYNTHASE DELTA CHAIN"/>
    <property type="match status" value="1"/>
</dbReference>
<dbReference type="Pfam" id="PF00430">
    <property type="entry name" value="ATP-synt_B"/>
    <property type="match status" value="1"/>
</dbReference>
<dbReference type="Pfam" id="PF00213">
    <property type="entry name" value="OSCP"/>
    <property type="match status" value="1"/>
</dbReference>
<dbReference type="PRINTS" id="PR00125">
    <property type="entry name" value="ATPASEDELTA"/>
</dbReference>
<dbReference type="SUPFAM" id="SSF81573">
    <property type="entry name" value="F1F0 ATP synthase subunit B, membrane domain"/>
    <property type="match status" value="1"/>
</dbReference>
<sequence length="446" mass="48792">MSTFIGQLFGFAVIVYLVWRFIVPVVGRLMSARQDTVRQQLADAAAAADRLAEASQAHTKALEDAKSEAHRVVEEARTDAERIAEQLEAQADVEAERIKMQGARQVDLIRAQLTRQLRLELGHESVRQARELVRNHVADQAQQSATVDRFLDQLDAMAPATADVDYPLLAKMRSASRRALTSLVDWFGTMAQDLDHQGLTTLAGELVSVARLLDREAVVTRYLTVPAEDATPRIRLIERLVSGKVGAPTLEVLRTAVSKRWSANSDLIDAIEHVSRQALLELAERAGQVDEVEDQLFRFSRILDVQPRLAILLGDCAVPAEGRVRLLRKVLERADSTVNPVVVALLSHTVELLRGQAVEEAVLFLAEVAVARRGEIVAQVGAAAELSDAQRTRLTEVLSRIYGHPVTVQLHIDAALLGGLSIAVGDEVIDGTLSSRLAAAEARLPD</sequence>
<name>ATPFD_MYCTO</name>